<comment type="function">
    <text evidence="1">NDH shuttles electrons from NAD(P)H:plastoquinone, via FMN and iron-sulfur (Fe-S) centers, to quinones in the photosynthetic chain and possibly in a chloroplast respiratory chain. The immediate electron acceptor for the enzyme in this species is believed to be plastoquinone. Couples the redox reaction to proton translocation, and thus conserves the redox energy in a proton gradient.</text>
</comment>
<comment type="catalytic activity">
    <reaction evidence="1">
        <text>a plastoquinone + NADH + (n+1) H(+)(in) = a plastoquinol + NAD(+) + n H(+)(out)</text>
        <dbReference type="Rhea" id="RHEA:42608"/>
        <dbReference type="Rhea" id="RHEA-COMP:9561"/>
        <dbReference type="Rhea" id="RHEA-COMP:9562"/>
        <dbReference type="ChEBI" id="CHEBI:15378"/>
        <dbReference type="ChEBI" id="CHEBI:17757"/>
        <dbReference type="ChEBI" id="CHEBI:57540"/>
        <dbReference type="ChEBI" id="CHEBI:57945"/>
        <dbReference type="ChEBI" id="CHEBI:62192"/>
    </reaction>
</comment>
<comment type="catalytic activity">
    <reaction evidence="1">
        <text>a plastoquinone + NADPH + (n+1) H(+)(in) = a plastoquinol + NADP(+) + n H(+)(out)</text>
        <dbReference type="Rhea" id="RHEA:42612"/>
        <dbReference type="Rhea" id="RHEA-COMP:9561"/>
        <dbReference type="Rhea" id="RHEA-COMP:9562"/>
        <dbReference type="ChEBI" id="CHEBI:15378"/>
        <dbReference type="ChEBI" id="CHEBI:17757"/>
        <dbReference type="ChEBI" id="CHEBI:57783"/>
        <dbReference type="ChEBI" id="CHEBI:58349"/>
        <dbReference type="ChEBI" id="CHEBI:62192"/>
    </reaction>
</comment>
<comment type="cofactor">
    <cofactor evidence="1">
        <name>[4Fe-4S] cluster</name>
        <dbReference type="ChEBI" id="CHEBI:49883"/>
    </cofactor>
    <text evidence="1">Binds 2 [4Fe-4S] clusters per subunit.</text>
</comment>
<comment type="subunit">
    <text evidence="1">NDH is composed of at least 16 different subunits, 5 of which are encoded in the nucleus.</text>
</comment>
<comment type="subcellular location">
    <subcellularLocation>
        <location evidence="1">Plastid</location>
        <location evidence="1">Chloroplast thylakoid membrane</location>
        <topology evidence="1">Peripheral membrane protein</topology>
    </subcellularLocation>
</comment>
<comment type="similarity">
    <text evidence="1">Belongs to the complex I 23 kDa subunit family.</text>
</comment>
<proteinExistence type="inferred from homology"/>
<organism>
    <name type="scientific">Smallanthus microcephalus</name>
    <name type="common">Hairy leafcup</name>
    <name type="synonym">Polymnia microcephala</name>
    <dbReference type="NCBI Taxonomy" id="183077"/>
    <lineage>
        <taxon>Eukaryota</taxon>
        <taxon>Viridiplantae</taxon>
        <taxon>Streptophyta</taxon>
        <taxon>Embryophyta</taxon>
        <taxon>Tracheophyta</taxon>
        <taxon>Spermatophyta</taxon>
        <taxon>Magnoliopsida</taxon>
        <taxon>eudicotyledons</taxon>
        <taxon>Gunneridae</taxon>
        <taxon>Pentapetalae</taxon>
        <taxon>asterids</taxon>
        <taxon>campanulids</taxon>
        <taxon>Asterales</taxon>
        <taxon>Asteraceae</taxon>
        <taxon>Asteroideae</taxon>
        <taxon>Heliantheae alliance</taxon>
        <taxon>Millerieae</taxon>
        <taxon>Smallanthus</taxon>
    </lineage>
</organism>
<sequence length="166" mass="19475">MFPMVTEFMNYGQQTVRAARYIGQGFMITLSHANRLPVTIQYPYEKLITSERFRGRIHFEFDKCIACEVCVRVCPIDLPVVDWKLETDIRKKRLLNYSIDFGICIFCGNCVEYCPTNCLSMTEEYELSTYDRHELNYNQIALGRLPMSIIDDYTIRTILNLPEIKT</sequence>
<protein>
    <recommendedName>
        <fullName evidence="1">NAD(P)H-quinone oxidoreductase subunit I, chloroplastic</fullName>
        <ecNumber evidence="1">7.1.1.-</ecNumber>
    </recommendedName>
    <alternativeName>
        <fullName evidence="1">NAD(P)H dehydrogenase subunit I</fullName>
        <shortName evidence="1">NDH subunit I</shortName>
    </alternativeName>
    <alternativeName>
        <fullName evidence="1">NADH-plastoquinone oxidoreductase subunit I</fullName>
    </alternativeName>
</protein>
<geneLocation type="chloroplast"/>
<gene>
    <name evidence="1" type="primary">ndhI</name>
</gene>
<feature type="chain" id="PRO_0000250850" description="NAD(P)H-quinone oxidoreductase subunit I, chloroplastic">
    <location>
        <begin position="1"/>
        <end position="166"/>
    </location>
</feature>
<feature type="domain" description="4Fe-4S ferredoxin-type 1" evidence="1">
    <location>
        <begin position="55"/>
        <end position="84"/>
    </location>
</feature>
<feature type="domain" description="4Fe-4S ferredoxin-type 2" evidence="1">
    <location>
        <begin position="95"/>
        <end position="124"/>
    </location>
</feature>
<feature type="binding site" evidence="1">
    <location>
        <position position="64"/>
    </location>
    <ligand>
        <name>[4Fe-4S] cluster</name>
        <dbReference type="ChEBI" id="CHEBI:49883"/>
        <label>1</label>
    </ligand>
</feature>
<feature type="binding site" evidence="1">
    <location>
        <position position="67"/>
    </location>
    <ligand>
        <name>[4Fe-4S] cluster</name>
        <dbReference type="ChEBI" id="CHEBI:49883"/>
        <label>1</label>
    </ligand>
</feature>
<feature type="binding site" evidence="1">
    <location>
        <position position="70"/>
    </location>
    <ligand>
        <name>[4Fe-4S] cluster</name>
        <dbReference type="ChEBI" id="CHEBI:49883"/>
        <label>1</label>
    </ligand>
</feature>
<feature type="binding site" evidence="1">
    <location>
        <position position="74"/>
    </location>
    <ligand>
        <name>[4Fe-4S] cluster</name>
        <dbReference type="ChEBI" id="CHEBI:49883"/>
        <label>2</label>
    </ligand>
</feature>
<feature type="binding site" evidence="1">
    <location>
        <position position="104"/>
    </location>
    <ligand>
        <name>[4Fe-4S] cluster</name>
        <dbReference type="ChEBI" id="CHEBI:49883"/>
        <label>2</label>
    </ligand>
</feature>
<feature type="binding site" evidence="1">
    <location>
        <position position="107"/>
    </location>
    <ligand>
        <name>[4Fe-4S] cluster</name>
        <dbReference type="ChEBI" id="CHEBI:49883"/>
        <label>2</label>
    </ligand>
</feature>
<feature type="binding site" evidence="1">
    <location>
        <position position="110"/>
    </location>
    <ligand>
        <name>[4Fe-4S] cluster</name>
        <dbReference type="ChEBI" id="CHEBI:49883"/>
        <label>2</label>
    </ligand>
</feature>
<feature type="binding site" evidence="1">
    <location>
        <position position="114"/>
    </location>
    <ligand>
        <name>[4Fe-4S] cluster</name>
        <dbReference type="ChEBI" id="CHEBI:49883"/>
        <label>1</label>
    </ligand>
</feature>
<accession>Q8HVL2</accession>
<evidence type="ECO:0000255" key="1">
    <source>
        <dbReference type="HAMAP-Rule" id="MF_01351"/>
    </source>
</evidence>
<reference key="1">
    <citation type="submission" date="2003-01" db="EMBL/GenBank/DDBJ databases">
        <title>Chloroplast DNA phylogeny of tribe Heliantheae (Asteraceae).</title>
        <authorList>
            <person name="Panero J.L."/>
            <person name="Baldwin B.G."/>
            <person name="Schilling E.E."/>
            <person name="Clevinger J.A."/>
        </authorList>
    </citation>
    <scope>NUCLEOTIDE SEQUENCE [GENOMIC DNA]</scope>
</reference>
<name>NDHI_SMAMI</name>
<keyword id="KW-0004">4Fe-4S</keyword>
<keyword id="KW-0150">Chloroplast</keyword>
<keyword id="KW-0408">Iron</keyword>
<keyword id="KW-0411">Iron-sulfur</keyword>
<keyword id="KW-0472">Membrane</keyword>
<keyword id="KW-0479">Metal-binding</keyword>
<keyword id="KW-0520">NAD</keyword>
<keyword id="KW-0521">NADP</keyword>
<keyword id="KW-0934">Plastid</keyword>
<keyword id="KW-0618">Plastoquinone</keyword>
<keyword id="KW-0874">Quinone</keyword>
<keyword id="KW-0677">Repeat</keyword>
<keyword id="KW-0793">Thylakoid</keyword>
<keyword id="KW-1278">Translocase</keyword>
<dbReference type="EC" id="7.1.1.-" evidence="1"/>
<dbReference type="EMBL" id="AF383851">
    <property type="protein sequence ID" value="AAN61792.1"/>
    <property type="molecule type" value="Genomic_DNA"/>
</dbReference>
<dbReference type="SMR" id="Q8HVL2"/>
<dbReference type="GO" id="GO:0009535">
    <property type="term" value="C:chloroplast thylakoid membrane"/>
    <property type="evidence" value="ECO:0007669"/>
    <property type="project" value="UniProtKB-SubCell"/>
</dbReference>
<dbReference type="GO" id="GO:0051539">
    <property type="term" value="F:4 iron, 4 sulfur cluster binding"/>
    <property type="evidence" value="ECO:0007669"/>
    <property type="project" value="UniProtKB-KW"/>
</dbReference>
<dbReference type="GO" id="GO:0005506">
    <property type="term" value="F:iron ion binding"/>
    <property type="evidence" value="ECO:0007669"/>
    <property type="project" value="UniProtKB-UniRule"/>
</dbReference>
<dbReference type="GO" id="GO:0008137">
    <property type="term" value="F:NADH dehydrogenase (ubiquinone) activity"/>
    <property type="evidence" value="ECO:0007669"/>
    <property type="project" value="InterPro"/>
</dbReference>
<dbReference type="GO" id="GO:0048038">
    <property type="term" value="F:quinone binding"/>
    <property type="evidence" value="ECO:0007669"/>
    <property type="project" value="UniProtKB-KW"/>
</dbReference>
<dbReference type="GO" id="GO:0019684">
    <property type="term" value="P:photosynthesis, light reaction"/>
    <property type="evidence" value="ECO:0007669"/>
    <property type="project" value="UniProtKB-UniRule"/>
</dbReference>
<dbReference type="FunFam" id="3.30.70.3270:FF:000006">
    <property type="entry name" value="NAD(P)H-quinone oxidoreductase subunit I, chloroplastic"/>
    <property type="match status" value="1"/>
</dbReference>
<dbReference type="Gene3D" id="3.30.70.3270">
    <property type="match status" value="1"/>
</dbReference>
<dbReference type="HAMAP" id="MF_01351">
    <property type="entry name" value="NDH1_NuoI"/>
    <property type="match status" value="1"/>
</dbReference>
<dbReference type="InterPro" id="IPR017896">
    <property type="entry name" value="4Fe4S_Fe-S-bd"/>
</dbReference>
<dbReference type="InterPro" id="IPR017900">
    <property type="entry name" value="4Fe4S_Fe_S_CS"/>
</dbReference>
<dbReference type="InterPro" id="IPR010226">
    <property type="entry name" value="NADH_quinone_OxRdtase_chainI"/>
</dbReference>
<dbReference type="InterPro" id="IPR004497">
    <property type="entry name" value="NDHI"/>
</dbReference>
<dbReference type="NCBIfam" id="TIGR00403">
    <property type="entry name" value="ndhI"/>
    <property type="match status" value="1"/>
</dbReference>
<dbReference type="NCBIfam" id="TIGR01971">
    <property type="entry name" value="NuoI"/>
    <property type="match status" value="1"/>
</dbReference>
<dbReference type="NCBIfam" id="NF004537">
    <property type="entry name" value="PRK05888.1-3"/>
    <property type="match status" value="1"/>
</dbReference>
<dbReference type="PANTHER" id="PTHR47275">
    <property type="entry name" value="NAD(P)H-QUINONE OXIDOREDUCTASE SUBUNIT I, CHLOROPLASTIC"/>
    <property type="match status" value="1"/>
</dbReference>
<dbReference type="PANTHER" id="PTHR47275:SF1">
    <property type="entry name" value="NAD(P)H-QUINONE OXIDOREDUCTASE SUBUNIT I, CHLOROPLASTIC"/>
    <property type="match status" value="1"/>
</dbReference>
<dbReference type="Pfam" id="PF00037">
    <property type="entry name" value="Fer4"/>
    <property type="match status" value="2"/>
</dbReference>
<dbReference type="SUPFAM" id="SSF54862">
    <property type="entry name" value="4Fe-4S ferredoxins"/>
    <property type="match status" value="1"/>
</dbReference>
<dbReference type="PROSITE" id="PS00198">
    <property type="entry name" value="4FE4S_FER_1"/>
    <property type="match status" value="2"/>
</dbReference>
<dbReference type="PROSITE" id="PS51379">
    <property type="entry name" value="4FE4S_FER_2"/>
    <property type="match status" value="2"/>
</dbReference>